<proteinExistence type="inferred from homology"/>
<keyword id="KW-0106">Calcium</keyword>
<keyword id="KW-0186">Copper</keyword>
<keyword id="KW-0249">Electron transport</keyword>
<keyword id="KW-0349">Heme</keyword>
<keyword id="KW-0408">Iron</keyword>
<keyword id="KW-0460">Magnesium</keyword>
<keyword id="KW-0472">Membrane</keyword>
<keyword id="KW-0479">Metal-binding</keyword>
<keyword id="KW-0496">Mitochondrion</keyword>
<keyword id="KW-0999">Mitochondrion inner membrane</keyword>
<keyword id="KW-0679">Respiratory chain</keyword>
<keyword id="KW-0915">Sodium</keyword>
<keyword id="KW-1278">Translocase</keyword>
<keyword id="KW-0812">Transmembrane</keyword>
<keyword id="KW-1133">Transmembrane helix</keyword>
<keyword id="KW-0813">Transport</keyword>
<geneLocation type="mitochondrion"/>
<feature type="chain" id="PRO_0000183330" description="Cytochrome c oxidase subunit 1">
    <location>
        <begin position="1"/>
        <end position="513"/>
    </location>
</feature>
<feature type="topological domain" description="Mitochondrial matrix" evidence="2">
    <location>
        <begin position="1"/>
        <end position="11"/>
    </location>
</feature>
<feature type="transmembrane region" description="Helical; Name=I" evidence="2">
    <location>
        <begin position="12"/>
        <end position="40"/>
    </location>
</feature>
<feature type="topological domain" description="Mitochondrial intermembrane" evidence="2">
    <location>
        <begin position="41"/>
        <end position="50"/>
    </location>
</feature>
<feature type="transmembrane region" description="Helical; Name=II" evidence="2">
    <location>
        <begin position="51"/>
        <end position="86"/>
    </location>
</feature>
<feature type="topological domain" description="Mitochondrial matrix" evidence="2">
    <location>
        <begin position="87"/>
        <end position="94"/>
    </location>
</feature>
<feature type="transmembrane region" description="Helical; Name=III" evidence="2">
    <location>
        <begin position="95"/>
        <end position="117"/>
    </location>
</feature>
<feature type="topological domain" description="Mitochondrial intermembrane" evidence="2">
    <location>
        <begin position="118"/>
        <end position="140"/>
    </location>
</feature>
<feature type="transmembrane region" description="Helical; Name=IV" evidence="2">
    <location>
        <begin position="141"/>
        <end position="170"/>
    </location>
</feature>
<feature type="topological domain" description="Mitochondrial matrix" evidence="2">
    <location>
        <begin position="171"/>
        <end position="182"/>
    </location>
</feature>
<feature type="transmembrane region" description="Helical; Name=V" evidence="2">
    <location>
        <begin position="183"/>
        <end position="212"/>
    </location>
</feature>
<feature type="topological domain" description="Mitochondrial intermembrane" evidence="2">
    <location>
        <begin position="213"/>
        <end position="227"/>
    </location>
</feature>
<feature type="transmembrane region" description="Helical; Name=VI" evidence="2">
    <location>
        <begin position="228"/>
        <end position="261"/>
    </location>
</feature>
<feature type="topological domain" description="Mitochondrial matrix" evidence="2">
    <location>
        <begin position="262"/>
        <end position="269"/>
    </location>
</feature>
<feature type="transmembrane region" description="Helical; Name=VII" evidence="2">
    <location>
        <begin position="270"/>
        <end position="286"/>
    </location>
</feature>
<feature type="topological domain" description="Mitochondrial intermembrane" evidence="2">
    <location>
        <begin position="287"/>
        <end position="298"/>
    </location>
</feature>
<feature type="transmembrane region" description="Helical; Name=VIII" evidence="2">
    <location>
        <begin position="299"/>
        <end position="327"/>
    </location>
</feature>
<feature type="topological domain" description="Mitochondrial matrix" evidence="2">
    <location>
        <begin position="328"/>
        <end position="335"/>
    </location>
</feature>
<feature type="transmembrane region" description="Helical; Name=IX" evidence="2">
    <location>
        <begin position="336"/>
        <end position="357"/>
    </location>
</feature>
<feature type="topological domain" description="Mitochondrial intermembrane" evidence="2">
    <location>
        <begin position="358"/>
        <end position="370"/>
    </location>
</feature>
<feature type="transmembrane region" description="Helical; Name=X" evidence="2">
    <location>
        <begin position="371"/>
        <end position="400"/>
    </location>
</feature>
<feature type="topological domain" description="Mitochondrial matrix" evidence="2">
    <location>
        <begin position="401"/>
        <end position="406"/>
    </location>
</feature>
<feature type="transmembrane region" description="Helical; Name=XI" evidence="2">
    <location>
        <begin position="407"/>
        <end position="433"/>
    </location>
</feature>
<feature type="topological domain" description="Mitochondrial intermembrane" evidence="2">
    <location>
        <begin position="434"/>
        <end position="446"/>
    </location>
</feature>
<feature type="transmembrane region" description="Helical; Name=XII" evidence="2">
    <location>
        <begin position="447"/>
        <end position="478"/>
    </location>
</feature>
<feature type="topological domain" description="Mitochondrial matrix" evidence="2">
    <location>
        <begin position="479"/>
        <end position="513"/>
    </location>
</feature>
<feature type="binding site" evidence="2">
    <location>
        <position position="40"/>
    </location>
    <ligand>
        <name>Na(+)</name>
        <dbReference type="ChEBI" id="CHEBI:29101"/>
    </ligand>
</feature>
<feature type="binding site" evidence="2">
    <location>
        <position position="45"/>
    </location>
    <ligand>
        <name>Na(+)</name>
        <dbReference type="ChEBI" id="CHEBI:29101"/>
    </ligand>
</feature>
<feature type="binding site" description="axial binding residue" evidence="2">
    <location>
        <position position="61"/>
    </location>
    <ligand>
        <name>Fe(II)-heme a</name>
        <dbReference type="ChEBI" id="CHEBI:61715"/>
        <note>low-spin</note>
    </ligand>
    <ligandPart>
        <name>Fe</name>
        <dbReference type="ChEBI" id="CHEBI:18248"/>
    </ligandPart>
</feature>
<feature type="binding site" evidence="2">
    <location>
        <position position="240"/>
    </location>
    <ligand>
        <name>Cu cation</name>
        <dbReference type="ChEBI" id="CHEBI:23378"/>
        <label>B</label>
    </ligand>
</feature>
<feature type="binding site" evidence="2">
    <location>
        <position position="244"/>
    </location>
    <ligand>
        <name>O2</name>
        <dbReference type="ChEBI" id="CHEBI:15379"/>
    </ligand>
</feature>
<feature type="binding site" evidence="2">
    <location>
        <position position="290"/>
    </location>
    <ligand>
        <name>Cu cation</name>
        <dbReference type="ChEBI" id="CHEBI:23378"/>
        <label>B</label>
    </ligand>
</feature>
<feature type="binding site" evidence="2">
    <location>
        <position position="291"/>
    </location>
    <ligand>
        <name>Cu cation</name>
        <dbReference type="ChEBI" id="CHEBI:23378"/>
        <label>B</label>
    </ligand>
</feature>
<feature type="binding site" evidence="2">
    <location>
        <position position="368"/>
    </location>
    <ligand>
        <name>Mg(2+)</name>
        <dbReference type="ChEBI" id="CHEBI:18420"/>
        <note>ligand shared with MT-CO2</note>
    </ligand>
</feature>
<feature type="binding site" evidence="2">
    <location>
        <position position="369"/>
    </location>
    <ligand>
        <name>Mg(2+)</name>
        <dbReference type="ChEBI" id="CHEBI:18420"/>
        <note>ligand shared with MT-CO2</note>
    </ligand>
</feature>
<feature type="binding site" description="axial binding residue" evidence="2">
    <location>
        <position position="376"/>
    </location>
    <ligand>
        <name>heme a3</name>
        <dbReference type="ChEBI" id="CHEBI:83282"/>
        <note>high-spin</note>
    </ligand>
    <ligandPart>
        <name>Fe</name>
        <dbReference type="ChEBI" id="CHEBI:18248"/>
    </ligandPart>
</feature>
<feature type="binding site" description="axial binding residue" evidence="2">
    <location>
        <position position="378"/>
    </location>
    <ligand>
        <name>Fe(II)-heme a</name>
        <dbReference type="ChEBI" id="CHEBI:61715"/>
        <note>low-spin</note>
    </ligand>
    <ligandPart>
        <name>Fe</name>
        <dbReference type="ChEBI" id="CHEBI:18248"/>
    </ligandPart>
</feature>
<feature type="binding site" evidence="2">
    <location>
        <position position="441"/>
    </location>
    <ligand>
        <name>Na(+)</name>
        <dbReference type="ChEBI" id="CHEBI:29101"/>
    </ligand>
</feature>
<feature type="cross-link" description="1'-histidyl-3'-tyrosine (His-Tyr)" evidence="2">
    <location>
        <begin position="240"/>
        <end position="244"/>
    </location>
</feature>
<feature type="sequence conflict" description="In Ref. 1; CAD18910." evidence="4" ref="1">
    <original>A</original>
    <variation>V</variation>
    <location>
        <position position="258"/>
    </location>
</feature>
<gene>
    <name type="primary">MT-CO1</name>
    <name type="synonym">COI</name>
    <name type="synonym">COXI</name>
    <name type="synonym">MTCO1</name>
</gene>
<sequence>MFINRWLFSTNHKDIGTLYLLFGAWAGMVGTALSILIRAELGQPGTLLGDDQIYNVIVTAHAFVMIFFMVMPIMIGGFGNWLVPLMIGAPDMAFPRMNNMSFWLLPPSFLLLLASSMIEAGAGTGWTVYPPLAGNLAHGGASVDLTIFSLHLAGVSSILGAINFITTIINMKPPAMTQYQTPLFVWSVLVTAVLLLLSLPVLAAGITMLLTDRNLNTTFFDPAGGGDPILYQHLFWFFGHPEVYILILPGFGMISHIATYYSGKKEPFGYMGMVWAMMSIGFLGFIVWAHHMFTVGMDVDTRAYFTSATMIIAIPTGVKVFSWLATLHGGNIKWSPALLWALGFIFLFTVGGLTGIVLANSSLDVVLHDTYYVVAHFHYVLSMGAVFAIMGGFVHWFPLFSGYTLNQTWAKIHFLIMFVGVNLTFFPQHFLGLSGMPRRYSDYPDAYTMWNTVSSMGSFISLTAVILMVFMVWEAFASKREVSTVELTTTNLEWLNGCPPSYHTFEEPAYVKI</sequence>
<organism>
    <name type="scientific">Dugong dugon</name>
    <name type="common">Dugong</name>
    <name type="synonym">Trichechus dugon</name>
    <dbReference type="NCBI Taxonomy" id="29137"/>
    <lineage>
        <taxon>Eukaryota</taxon>
        <taxon>Metazoa</taxon>
        <taxon>Chordata</taxon>
        <taxon>Craniata</taxon>
        <taxon>Vertebrata</taxon>
        <taxon>Euteleostomi</taxon>
        <taxon>Mammalia</taxon>
        <taxon>Eutheria</taxon>
        <taxon>Afrotheria</taxon>
        <taxon>Sirenia</taxon>
        <taxon>Dugongidae</taxon>
        <taxon>Dugong</taxon>
    </lineage>
</organism>
<accession>Q8W9N4</accession>
<accession>Q8SK60</accession>
<protein>
    <recommendedName>
        <fullName>Cytochrome c oxidase subunit 1</fullName>
        <ecNumber>7.1.1.9</ecNumber>
    </recommendedName>
    <alternativeName>
        <fullName>Cytochrome c oxidase polypeptide I</fullName>
    </alternativeName>
</protein>
<name>COX1_DUGDU</name>
<dbReference type="EC" id="7.1.1.9"/>
<dbReference type="EMBL" id="AJ421723">
    <property type="protein sequence ID" value="CAD18910.1"/>
    <property type="molecule type" value="Genomic_DNA"/>
</dbReference>
<dbReference type="EMBL" id="AY075116">
    <property type="protein sequence ID" value="AAL79365.1"/>
    <property type="molecule type" value="Genomic_DNA"/>
</dbReference>
<dbReference type="SMR" id="Q8W9N4"/>
<dbReference type="CTD" id="4512"/>
<dbReference type="UniPathway" id="UPA00705"/>
<dbReference type="GO" id="GO:0005743">
    <property type="term" value="C:mitochondrial inner membrane"/>
    <property type="evidence" value="ECO:0007669"/>
    <property type="project" value="UniProtKB-SubCell"/>
</dbReference>
<dbReference type="GO" id="GO:0045277">
    <property type="term" value="C:respiratory chain complex IV"/>
    <property type="evidence" value="ECO:0000250"/>
    <property type="project" value="UniProtKB"/>
</dbReference>
<dbReference type="GO" id="GO:0004129">
    <property type="term" value="F:cytochrome-c oxidase activity"/>
    <property type="evidence" value="ECO:0007669"/>
    <property type="project" value="UniProtKB-EC"/>
</dbReference>
<dbReference type="GO" id="GO:0020037">
    <property type="term" value="F:heme binding"/>
    <property type="evidence" value="ECO:0007669"/>
    <property type="project" value="InterPro"/>
</dbReference>
<dbReference type="GO" id="GO:0046872">
    <property type="term" value="F:metal ion binding"/>
    <property type="evidence" value="ECO:0007669"/>
    <property type="project" value="UniProtKB-KW"/>
</dbReference>
<dbReference type="GO" id="GO:0015990">
    <property type="term" value="P:electron transport coupled proton transport"/>
    <property type="evidence" value="ECO:0007669"/>
    <property type="project" value="TreeGrafter"/>
</dbReference>
<dbReference type="GO" id="GO:0006123">
    <property type="term" value="P:mitochondrial electron transport, cytochrome c to oxygen"/>
    <property type="evidence" value="ECO:0007669"/>
    <property type="project" value="TreeGrafter"/>
</dbReference>
<dbReference type="CDD" id="cd01663">
    <property type="entry name" value="Cyt_c_Oxidase_I"/>
    <property type="match status" value="1"/>
</dbReference>
<dbReference type="FunFam" id="1.20.210.10:FF:000001">
    <property type="entry name" value="Cytochrome c oxidase subunit 1"/>
    <property type="match status" value="1"/>
</dbReference>
<dbReference type="Gene3D" id="1.20.210.10">
    <property type="entry name" value="Cytochrome c oxidase-like, subunit I domain"/>
    <property type="match status" value="1"/>
</dbReference>
<dbReference type="InterPro" id="IPR023616">
    <property type="entry name" value="Cyt_c_oxase-like_su1_dom"/>
</dbReference>
<dbReference type="InterPro" id="IPR036927">
    <property type="entry name" value="Cyt_c_oxase-like_su1_sf"/>
</dbReference>
<dbReference type="InterPro" id="IPR000883">
    <property type="entry name" value="Cyt_C_Oxase_1"/>
</dbReference>
<dbReference type="InterPro" id="IPR023615">
    <property type="entry name" value="Cyt_c_Oxase_su1_BS"/>
</dbReference>
<dbReference type="InterPro" id="IPR033944">
    <property type="entry name" value="Cyt_c_oxase_su1_dom"/>
</dbReference>
<dbReference type="PANTHER" id="PTHR10422">
    <property type="entry name" value="CYTOCHROME C OXIDASE SUBUNIT 1"/>
    <property type="match status" value="1"/>
</dbReference>
<dbReference type="PANTHER" id="PTHR10422:SF18">
    <property type="entry name" value="CYTOCHROME C OXIDASE SUBUNIT 1"/>
    <property type="match status" value="1"/>
</dbReference>
<dbReference type="Pfam" id="PF00115">
    <property type="entry name" value="COX1"/>
    <property type="match status" value="1"/>
</dbReference>
<dbReference type="PRINTS" id="PR01165">
    <property type="entry name" value="CYCOXIDASEI"/>
</dbReference>
<dbReference type="SUPFAM" id="SSF81442">
    <property type="entry name" value="Cytochrome c oxidase subunit I-like"/>
    <property type="match status" value="1"/>
</dbReference>
<dbReference type="PROSITE" id="PS50855">
    <property type="entry name" value="COX1"/>
    <property type="match status" value="1"/>
</dbReference>
<dbReference type="PROSITE" id="PS00077">
    <property type="entry name" value="COX1_CUB"/>
    <property type="match status" value="1"/>
</dbReference>
<evidence type="ECO:0000250" key="1">
    <source>
        <dbReference type="UniProtKB" id="P00395"/>
    </source>
</evidence>
<evidence type="ECO:0000250" key="2">
    <source>
        <dbReference type="UniProtKB" id="P00396"/>
    </source>
</evidence>
<evidence type="ECO:0000250" key="3">
    <source>
        <dbReference type="UniProtKB" id="P00401"/>
    </source>
</evidence>
<evidence type="ECO:0000305" key="4"/>
<comment type="function">
    <text evidence="3">Component of the cytochrome c oxidase, the last enzyme in the mitochondrial electron transport chain which drives oxidative phosphorylation. The respiratory chain contains 3 multisubunit complexes succinate dehydrogenase (complex II, CII), ubiquinol-cytochrome c oxidoreductase (cytochrome b-c1 complex, complex III, CIII) and cytochrome c oxidase (complex IV, CIV), that cooperate to transfer electrons derived from NADH and succinate to molecular oxygen, creating an electrochemical gradient over the inner membrane that drives transmembrane transport and the ATP synthase. Cytochrome c oxidase is the component of the respiratory chain that catalyzes the reduction of oxygen to water. Electrons originating from reduced cytochrome c in the intermembrane space (IMS) are transferred via the dinuclear copper A center (CU(A)) of subunit 2 and heme A of subunit 1 to the active site in subunit 1, a binuclear center (BNC) formed by heme A3 and copper B (CU(B)). The BNC reduces molecular oxygen to 2 water molecules using 4 electrons from cytochrome c in the IMS and 4 protons from the mitochondrial matrix.</text>
</comment>
<comment type="catalytic activity">
    <reaction evidence="3">
        <text>4 Fe(II)-[cytochrome c] + O2 + 8 H(+)(in) = 4 Fe(III)-[cytochrome c] + 2 H2O + 4 H(+)(out)</text>
        <dbReference type="Rhea" id="RHEA:11436"/>
        <dbReference type="Rhea" id="RHEA-COMP:10350"/>
        <dbReference type="Rhea" id="RHEA-COMP:14399"/>
        <dbReference type="ChEBI" id="CHEBI:15377"/>
        <dbReference type="ChEBI" id="CHEBI:15378"/>
        <dbReference type="ChEBI" id="CHEBI:15379"/>
        <dbReference type="ChEBI" id="CHEBI:29033"/>
        <dbReference type="ChEBI" id="CHEBI:29034"/>
        <dbReference type="EC" id="7.1.1.9"/>
    </reaction>
    <physiologicalReaction direction="left-to-right" evidence="3">
        <dbReference type="Rhea" id="RHEA:11437"/>
    </physiologicalReaction>
</comment>
<comment type="cofactor">
    <cofactor evidence="2">
        <name>heme</name>
        <dbReference type="ChEBI" id="CHEBI:30413"/>
    </cofactor>
    <text evidence="2">Binds 2 heme A groups non-covalently per subunit.</text>
</comment>
<comment type="cofactor">
    <cofactor evidence="2">
        <name>Cu cation</name>
        <dbReference type="ChEBI" id="CHEBI:23378"/>
    </cofactor>
    <text evidence="2">Binds a copper B center.</text>
</comment>
<comment type="pathway">
    <text evidence="3">Energy metabolism; oxidative phosphorylation.</text>
</comment>
<comment type="subunit">
    <text evidence="1 2">Component of the cytochrome c oxidase (complex IV, CIV), a multisubunit enzyme composed of 14 subunits. The complex is composed of a catalytic core of 3 subunits MT-CO1, MT-CO2 and MT-CO3, encoded in the mitochondrial DNA, and 11 supernumerary subunits COX4I, COX5A, COX5B, COX6A, COX6B, COX6C, COX7A, COX7B, COX7C, COX8 and NDUFA4, which are encoded in the nuclear genome. The complex exists as a monomer or a dimer and forms supercomplexes (SCs) in the inner mitochondrial membrane with NADH-ubiquinone oxidoreductase (complex I, CI) and ubiquinol-cytochrome c oxidoreductase (cytochrome b-c1 complex, complex III, CIII), resulting in different assemblies (supercomplex SCI(1)III(2)IV(1) and megacomplex MCI(2)III(2)IV(2)) (By similarity). As a newly synthesized protein, rapidly incorporates into a multi-subunit assembly intermediate in the inner membrane, called MITRAC (mitochondrial translation regulation assembly intermediate of cytochrome c oxidase) complex, whose core components are COA3/MITRAC12 and COX14. Within the MITRAC complex, interacts with COA3 and with SMIM20/MITRAC7; the interaction with SMIM20 stabilizes the newly synthesized MT-CO1 and prevents its premature turnover. Interacts with TMEM177 in a COX20-dependent manner (By similarity).</text>
</comment>
<comment type="subcellular location">
    <subcellularLocation>
        <location evidence="2">Mitochondrion inner membrane</location>
        <topology evidence="2">Multi-pass membrane protein</topology>
    </subcellularLocation>
</comment>
<comment type="similarity">
    <text evidence="4">Belongs to the heme-copper respiratory oxidase family.</text>
</comment>
<reference key="1">
    <citation type="journal article" date="2002" name="Proc. Natl. Acad. Sci. U.S.A.">
        <title>Mammalian mitogenomic relationships and the root of the eutherian tree.</title>
        <authorList>
            <person name="Arnason U."/>
            <person name="Adegoke J.A."/>
            <person name="Bodin K."/>
            <person name="Born E.W."/>
            <person name="Esa Y.B."/>
            <person name="Gullberg A."/>
            <person name="Nilsson M."/>
            <person name="Short R.V."/>
            <person name="Xu X."/>
            <person name="Janke A."/>
        </authorList>
    </citation>
    <scope>NUCLEOTIDE SEQUENCE [GENOMIC DNA]</scope>
</reference>
<reference key="2">
    <citation type="submission" date="2002-01" db="EMBL/GenBank/DDBJ databases">
        <title>Complete mitochondrial genome of a dugong.</title>
        <authorList>
            <person name="McLenachan P.A."/>
            <person name="Phillips M.J."/>
            <person name="Penny D."/>
        </authorList>
    </citation>
    <scope>NUCLEOTIDE SEQUENCE [GENOMIC DNA]</scope>
</reference>